<feature type="chain" id="PRO_0000207255" description="Leucyl/phenylalanyl-tRNA--protein transferase">
    <location>
        <begin position="1"/>
        <end position="236"/>
    </location>
</feature>
<keyword id="KW-0012">Acyltransferase</keyword>
<keyword id="KW-0963">Cytoplasm</keyword>
<keyword id="KW-0808">Transferase</keyword>
<comment type="function">
    <text evidence="1">Functions in the N-end rule pathway of protein degradation where it conjugates Leu, Phe and, less efficiently, Met from aminoacyl-tRNAs to the N-termini of proteins containing an N-terminal arginine or lysine.</text>
</comment>
<comment type="catalytic activity">
    <reaction evidence="1">
        <text>N-terminal L-lysyl-[protein] + L-leucyl-tRNA(Leu) = N-terminal L-leucyl-L-lysyl-[protein] + tRNA(Leu) + H(+)</text>
        <dbReference type="Rhea" id="RHEA:12340"/>
        <dbReference type="Rhea" id="RHEA-COMP:9613"/>
        <dbReference type="Rhea" id="RHEA-COMP:9622"/>
        <dbReference type="Rhea" id="RHEA-COMP:12670"/>
        <dbReference type="Rhea" id="RHEA-COMP:12671"/>
        <dbReference type="ChEBI" id="CHEBI:15378"/>
        <dbReference type="ChEBI" id="CHEBI:65249"/>
        <dbReference type="ChEBI" id="CHEBI:78442"/>
        <dbReference type="ChEBI" id="CHEBI:78494"/>
        <dbReference type="ChEBI" id="CHEBI:133043"/>
        <dbReference type="EC" id="2.3.2.6"/>
    </reaction>
</comment>
<comment type="catalytic activity">
    <reaction evidence="1">
        <text>N-terminal L-arginyl-[protein] + L-leucyl-tRNA(Leu) = N-terminal L-leucyl-L-arginyl-[protein] + tRNA(Leu) + H(+)</text>
        <dbReference type="Rhea" id="RHEA:50416"/>
        <dbReference type="Rhea" id="RHEA-COMP:9613"/>
        <dbReference type="Rhea" id="RHEA-COMP:9622"/>
        <dbReference type="Rhea" id="RHEA-COMP:12672"/>
        <dbReference type="Rhea" id="RHEA-COMP:12673"/>
        <dbReference type="ChEBI" id="CHEBI:15378"/>
        <dbReference type="ChEBI" id="CHEBI:64719"/>
        <dbReference type="ChEBI" id="CHEBI:78442"/>
        <dbReference type="ChEBI" id="CHEBI:78494"/>
        <dbReference type="ChEBI" id="CHEBI:133044"/>
        <dbReference type="EC" id="2.3.2.6"/>
    </reaction>
</comment>
<comment type="catalytic activity">
    <reaction evidence="1">
        <text>L-phenylalanyl-tRNA(Phe) + an N-terminal L-alpha-aminoacyl-[protein] = an N-terminal L-phenylalanyl-L-alpha-aminoacyl-[protein] + tRNA(Phe)</text>
        <dbReference type="Rhea" id="RHEA:43632"/>
        <dbReference type="Rhea" id="RHEA-COMP:9668"/>
        <dbReference type="Rhea" id="RHEA-COMP:9699"/>
        <dbReference type="Rhea" id="RHEA-COMP:10636"/>
        <dbReference type="Rhea" id="RHEA-COMP:10637"/>
        <dbReference type="ChEBI" id="CHEBI:78442"/>
        <dbReference type="ChEBI" id="CHEBI:78531"/>
        <dbReference type="ChEBI" id="CHEBI:78597"/>
        <dbReference type="ChEBI" id="CHEBI:83561"/>
        <dbReference type="EC" id="2.3.2.6"/>
    </reaction>
</comment>
<comment type="subcellular location">
    <subcellularLocation>
        <location evidence="1">Cytoplasm</location>
    </subcellularLocation>
</comment>
<comment type="similarity">
    <text evidence="1">Belongs to the L/F-transferase family.</text>
</comment>
<evidence type="ECO:0000255" key="1">
    <source>
        <dbReference type="HAMAP-Rule" id="MF_00688"/>
    </source>
</evidence>
<gene>
    <name evidence="1" type="primary">aat</name>
    <name type="ordered locus">YPTB1396</name>
</gene>
<accession>Q66CK7</accession>
<organism>
    <name type="scientific">Yersinia pseudotuberculosis serotype I (strain IP32953)</name>
    <dbReference type="NCBI Taxonomy" id="273123"/>
    <lineage>
        <taxon>Bacteria</taxon>
        <taxon>Pseudomonadati</taxon>
        <taxon>Pseudomonadota</taxon>
        <taxon>Gammaproteobacteria</taxon>
        <taxon>Enterobacterales</taxon>
        <taxon>Yersiniaceae</taxon>
        <taxon>Yersinia</taxon>
    </lineage>
</organism>
<sequence>MRVTQLSSQSFIFPSPELALREPNGLLALGGDLTAPRLLAAYQRGIFPWFNPGEMILWWSPDPRAVLFPEDLHISRSMRRFIRHCPYRFTLNHAFADVISACATERDEGTWIGRDVQQAYCQLHALGHAHSLEVWLENELVGGLYGVAVGAVFCGESMFSRADNASKSALMVFCHHFTQHGGELIDCQVLNAHTASLGAVEIPRNFFLQQLSQLQFSPLPAECWLPQSLNFSSAMQ</sequence>
<proteinExistence type="inferred from homology"/>
<protein>
    <recommendedName>
        <fullName evidence="1">Leucyl/phenylalanyl-tRNA--protein transferase</fullName>
        <ecNumber evidence="1">2.3.2.6</ecNumber>
    </recommendedName>
    <alternativeName>
        <fullName evidence="1">L/F-transferase</fullName>
    </alternativeName>
    <alternativeName>
        <fullName evidence="1">Leucyltransferase</fullName>
    </alternativeName>
    <alternativeName>
        <fullName evidence="1">Phenyalanyltransferase</fullName>
    </alternativeName>
</protein>
<dbReference type="EC" id="2.3.2.6" evidence="1"/>
<dbReference type="EMBL" id="BX936398">
    <property type="protein sequence ID" value="CAH20636.1"/>
    <property type="molecule type" value="Genomic_DNA"/>
</dbReference>
<dbReference type="RefSeq" id="WP_002211346.1">
    <property type="nucleotide sequence ID" value="NZ_CP009712.1"/>
</dbReference>
<dbReference type="SMR" id="Q66CK7"/>
<dbReference type="GeneID" id="57977167"/>
<dbReference type="KEGG" id="ypo:BZ17_1123"/>
<dbReference type="KEGG" id="yps:YPTB1396"/>
<dbReference type="PATRIC" id="fig|273123.14.peg.1192"/>
<dbReference type="Proteomes" id="UP000001011">
    <property type="component" value="Chromosome"/>
</dbReference>
<dbReference type="GO" id="GO:0005737">
    <property type="term" value="C:cytoplasm"/>
    <property type="evidence" value="ECO:0007669"/>
    <property type="project" value="UniProtKB-SubCell"/>
</dbReference>
<dbReference type="GO" id="GO:0008914">
    <property type="term" value="F:leucyl-tRNA--protein transferase activity"/>
    <property type="evidence" value="ECO:0007669"/>
    <property type="project" value="UniProtKB-UniRule"/>
</dbReference>
<dbReference type="GO" id="GO:0030163">
    <property type="term" value="P:protein catabolic process"/>
    <property type="evidence" value="ECO:0007669"/>
    <property type="project" value="UniProtKB-UniRule"/>
</dbReference>
<dbReference type="FunFam" id="3.30.70.3550:FF:000001">
    <property type="entry name" value="Leucyl/phenylalanyl-tRNA--protein transferase"/>
    <property type="match status" value="1"/>
</dbReference>
<dbReference type="FunFam" id="3.40.630.70:FF:000001">
    <property type="entry name" value="Leucyl/phenylalanyl-tRNA--protein transferase"/>
    <property type="match status" value="1"/>
</dbReference>
<dbReference type="Gene3D" id="3.40.630.70">
    <property type="entry name" value="Leucyl/phenylalanyl-tRNA-protein transferase, C-terminal domain"/>
    <property type="match status" value="1"/>
</dbReference>
<dbReference type="Gene3D" id="3.30.70.3550">
    <property type="entry name" value="Leucyl/phenylalanyl-tRNA-protein transferase, N-terminal domain"/>
    <property type="match status" value="1"/>
</dbReference>
<dbReference type="HAMAP" id="MF_00688">
    <property type="entry name" value="Leu_Phe_trans"/>
    <property type="match status" value="1"/>
</dbReference>
<dbReference type="InterPro" id="IPR016181">
    <property type="entry name" value="Acyl_CoA_acyltransferase"/>
</dbReference>
<dbReference type="InterPro" id="IPR004616">
    <property type="entry name" value="Leu/Phe-tRNA_Trfase"/>
</dbReference>
<dbReference type="InterPro" id="IPR042203">
    <property type="entry name" value="Leu/Phe-tRNA_Trfase_C"/>
</dbReference>
<dbReference type="InterPro" id="IPR042221">
    <property type="entry name" value="Leu/Phe-tRNA_Trfase_N"/>
</dbReference>
<dbReference type="NCBIfam" id="TIGR00667">
    <property type="entry name" value="aat"/>
    <property type="match status" value="1"/>
</dbReference>
<dbReference type="PANTHER" id="PTHR30098">
    <property type="entry name" value="LEUCYL/PHENYLALANYL-TRNA--PROTEIN TRANSFERASE"/>
    <property type="match status" value="1"/>
</dbReference>
<dbReference type="PANTHER" id="PTHR30098:SF2">
    <property type="entry name" value="LEUCYL_PHENYLALANYL-TRNA--PROTEIN TRANSFERASE"/>
    <property type="match status" value="1"/>
</dbReference>
<dbReference type="Pfam" id="PF03588">
    <property type="entry name" value="Leu_Phe_trans"/>
    <property type="match status" value="1"/>
</dbReference>
<dbReference type="SUPFAM" id="SSF55729">
    <property type="entry name" value="Acyl-CoA N-acyltransferases (Nat)"/>
    <property type="match status" value="1"/>
</dbReference>
<name>LFTR_YERPS</name>
<reference key="1">
    <citation type="journal article" date="2004" name="Proc. Natl. Acad. Sci. U.S.A.">
        <title>Insights into the evolution of Yersinia pestis through whole-genome comparison with Yersinia pseudotuberculosis.</title>
        <authorList>
            <person name="Chain P.S.G."/>
            <person name="Carniel E."/>
            <person name="Larimer F.W."/>
            <person name="Lamerdin J."/>
            <person name="Stoutland P.O."/>
            <person name="Regala W.M."/>
            <person name="Georgescu A.M."/>
            <person name="Vergez L.M."/>
            <person name="Land M.L."/>
            <person name="Motin V.L."/>
            <person name="Brubaker R.R."/>
            <person name="Fowler J."/>
            <person name="Hinnebusch J."/>
            <person name="Marceau M."/>
            <person name="Medigue C."/>
            <person name="Simonet M."/>
            <person name="Chenal-Francisque V."/>
            <person name="Souza B."/>
            <person name="Dacheux D."/>
            <person name="Elliott J.M."/>
            <person name="Derbise A."/>
            <person name="Hauser L.J."/>
            <person name="Garcia E."/>
        </authorList>
    </citation>
    <scope>NUCLEOTIDE SEQUENCE [LARGE SCALE GENOMIC DNA]</scope>
    <source>
        <strain>IP32953</strain>
    </source>
</reference>